<feature type="chain" id="PRO_0000416076" description="Epoxyqueuosine reductase">
    <location>
        <begin position="1"/>
        <end position="312"/>
    </location>
</feature>
<feature type="domain" description="4Fe-4S ferredoxin-type 1" evidence="1">
    <location>
        <begin position="174"/>
        <end position="206"/>
    </location>
</feature>
<feature type="domain" description="4Fe-4S ferredoxin-type 2" evidence="1">
    <location>
        <begin position="226"/>
        <end position="257"/>
    </location>
</feature>
<feature type="active site" description="Proton donor" evidence="1">
    <location>
        <position position="132"/>
    </location>
</feature>
<feature type="binding site" evidence="1">
    <location>
        <position position="186"/>
    </location>
    <ligand>
        <name>[4Fe-4S] cluster</name>
        <dbReference type="ChEBI" id="CHEBI:49883"/>
        <label>1</label>
    </ligand>
</feature>
<feature type="binding site" evidence="1">
    <location>
        <position position="189"/>
    </location>
    <ligand>
        <name>[4Fe-4S] cluster</name>
        <dbReference type="ChEBI" id="CHEBI:49883"/>
        <label>1</label>
    </ligand>
</feature>
<feature type="binding site" evidence="1">
    <location>
        <position position="192"/>
    </location>
    <ligand>
        <name>[4Fe-4S] cluster</name>
        <dbReference type="ChEBI" id="CHEBI:49883"/>
        <label>1</label>
    </ligand>
</feature>
<feature type="binding site" evidence="1">
    <location>
        <position position="196"/>
    </location>
    <ligand>
        <name>[4Fe-4S] cluster</name>
        <dbReference type="ChEBI" id="CHEBI:49883"/>
        <label>2</label>
    </ligand>
</feature>
<feature type="binding site" evidence="1">
    <location>
        <position position="212"/>
    </location>
    <ligand>
        <name>[4Fe-4S] cluster</name>
        <dbReference type="ChEBI" id="CHEBI:49883"/>
        <label>2</label>
    </ligand>
</feature>
<feature type="binding site" evidence="1">
    <location>
        <position position="240"/>
    </location>
    <ligand>
        <name>[4Fe-4S] cluster</name>
        <dbReference type="ChEBI" id="CHEBI:49883"/>
        <label>2</label>
    </ligand>
</feature>
<feature type="binding site" evidence="1">
    <location>
        <position position="243"/>
    </location>
    <ligand>
        <name>[4Fe-4S] cluster</name>
        <dbReference type="ChEBI" id="CHEBI:49883"/>
        <label>2</label>
    </ligand>
</feature>
<feature type="binding site" evidence="1">
    <location>
        <position position="247"/>
    </location>
    <ligand>
        <name>[4Fe-4S] cluster</name>
        <dbReference type="ChEBI" id="CHEBI:49883"/>
        <label>1</label>
    </ligand>
</feature>
<protein>
    <recommendedName>
        <fullName evidence="1">Epoxyqueuosine reductase</fullName>
        <ecNumber evidence="1">1.17.99.6</ecNumber>
    </recommendedName>
    <alternativeName>
        <fullName evidence="1">Queuosine biosynthesis protein QueG</fullName>
    </alternativeName>
</protein>
<organism>
    <name type="scientific">Prochlorococcus marinus (strain NATL2A)</name>
    <dbReference type="NCBI Taxonomy" id="59920"/>
    <lineage>
        <taxon>Bacteria</taxon>
        <taxon>Bacillati</taxon>
        <taxon>Cyanobacteriota</taxon>
        <taxon>Cyanophyceae</taxon>
        <taxon>Synechococcales</taxon>
        <taxon>Prochlorococcaceae</taxon>
        <taxon>Prochlorococcus</taxon>
    </lineage>
</organism>
<accession>Q46I55</accession>
<comment type="function">
    <text evidence="1">Catalyzes the conversion of epoxyqueuosine (oQ) to queuosine (Q), which is a hypermodified base found in the wobble positions of tRNA(Asp), tRNA(Asn), tRNA(His) and tRNA(Tyr).</text>
</comment>
<comment type="catalytic activity">
    <reaction evidence="1">
        <text>epoxyqueuosine(34) in tRNA + AH2 = queuosine(34) in tRNA + A + H2O</text>
        <dbReference type="Rhea" id="RHEA:32159"/>
        <dbReference type="Rhea" id="RHEA-COMP:18571"/>
        <dbReference type="Rhea" id="RHEA-COMP:18582"/>
        <dbReference type="ChEBI" id="CHEBI:13193"/>
        <dbReference type="ChEBI" id="CHEBI:15377"/>
        <dbReference type="ChEBI" id="CHEBI:17499"/>
        <dbReference type="ChEBI" id="CHEBI:194431"/>
        <dbReference type="ChEBI" id="CHEBI:194443"/>
        <dbReference type="EC" id="1.17.99.6"/>
    </reaction>
</comment>
<comment type="cofactor">
    <cofactor evidence="1">
        <name>cob(II)alamin</name>
        <dbReference type="ChEBI" id="CHEBI:16304"/>
    </cofactor>
</comment>
<comment type="cofactor">
    <cofactor evidence="1">
        <name>[4Fe-4S] cluster</name>
        <dbReference type="ChEBI" id="CHEBI:49883"/>
    </cofactor>
    <text evidence="1">Binds 2 [4Fe-4S] clusters per monomer.</text>
</comment>
<comment type="pathway">
    <text evidence="1">tRNA modification; tRNA-queuosine biosynthesis.</text>
</comment>
<comment type="subunit">
    <text evidence="1">Monomer.</text>
</comment>
<comment type="subcellular location">
    <subcellularLocation>
        <location evidence="1">Cytoplasm</location>
    </subcellularLocation>
</comment>
<comment type="similarity">
    <text evidence="1">Belongs to the QueG family.</text>
</comment>
<name>QUEG_PROMT</name>
<sequence>MRNSIDLTKKIKEKAFEEGFDAVGIAKVPGSSRIKLRTASLERWLQAGHQATMEWMKSPRRKDIENMLQGVKSILAVGLNYYVDTERESKDISIARYGWGKDYHKIIEEKLKKVAKFLETERPNAKWKICVDTSAFLDKAWAEEAGIGWIGKHSNVINSEIGSWMFLGHLLSTEVLEADKPSKPICGECEKCIEACPTKAIEEPFIVNSYKCLAYHTLENRDQELPENIINKMGNWIAGCDICQDVCPWNQKHIPSTTEPDLQPSEWILHTTKQDLLSWDDAKWKESLKNSALKRIKPWMWRRNIDSISKKT</sequence>
<dbReference type="EC" id="1.17.99.6" evidence="1"/>
<dbReference type="EMBL" id="CP000095">
    <property type="protein sequence ID" value="AAZ58823.1"/>
    <property type="molecule type" value="Genomic_DNA"/>
</dbReference>
<dbReference type="RefSeq" id="WP_011293967.1">
    <property type="nucleotide sequence ID" value="NC_007335.2"/>
</dbReference>
<dbReference type="SMR" id="Q46I55"/>
<dbReference type="STRING" id="59920.PMN2A_1334"/>
<dbReference type="KEGG" id="pmn:PMN2A_1334"/>
<dbReference type="HOGENOM" id="CLU_030790_0_0_3"/>
<dbReference type="OrthoDB" id="9784571at2"/>
<dbReference type="PhylomeDB" id="Q46I55"/>
<dbReference type="UniPathway" id="UPA00392"/>
<dbReference type="Proteomes" id="UP000002535">
    <property type="component" value="Chromosome"/>
</dbReference>
<dbReference type="GO" id="GO:0005737">
    <property type="term" value="C:cytoplasm"/>
    <property type="evidence" value="ECO:0007669"/>
    <property type="project" value="UniProtKB-SubCell"/>
</dbReference>
<dbReference type="GO" id="GO:0051539">
    <property type="term" value="F:4 iron, 4 sulfur cluster binding"/>
    <property type="evidence" value="ECO:0007669"/>
    <property type="project" value="UniProtKB-KW"/>
</dbReference>
<dbReference type="GO" id="GO:0052693">
    <property type="term" value="F:epoxyqueuosine reductase activity"/>
    <property type="evidence" value="ECO:0007669"/>
    <property type="project" value="UniProtKB-UniRule"/>
</dbReference>
<dbReference type="GO" id="GO:0046872">
    <property type="term" value="F:metal ion binding"/>
    <property type="evidence" value="ECO:0007669"/>
    <property type="project" value="UniProtKB-KW"/>
</dbReference>
<dbReference type="GO" id="GO:0008616">
    <property type="term" value="P:queuosine biosynthetic process"/>
    <property type="evidence" value="ECO:0007669"/>
    <property type="project" value="UniProtKB-UniRule"/>
</dbReference>
<dbReference type="GO" id="GO:0006400">
    <property type="term" value="P:tRNA modification"/>
    <property type="evidence" value="ECO:0007669"/>
    <property type="project" value="UniProtKB-UniRule"/>
</dbReference>
<dbReference type="Gene3D" id="3.30.70.20">
    <property type="match status" value="1"/>
</dbReference>
<dbReference type="HAMAP" id="MF_00916">
    <property type="entry name" value="QueG"/>
    <property type="match status" value="1"/>
</dbReference>
<dbReference type="InterPro" id="IPR017896">
    <property type="entry name" value="4Fe4S_Fe-S-bd"/>
</dbReference>
<dbReference type="InterPro" id="IPR017900">
    <property type="entry name" value="4Fe4S_Fe_S_CS"/>
</dbReference>
<dbReference type="InterPro" id="IPR004453">
    <property type="entry name" value="QueG"/>
</dbReference>
<dbReference type="InterPro" id="IPR013542">
    <property type="entry name" value="QueG_DUF1730"/>
</dbReference>
<dbReference type="NCBIfam" id="TIGR00276">
    <property type="entry name" value="tRNA epoxyqueuosine(34) reductase QueG"/>
    <property type="match status" value="1"/>
</dbReference>
<dbReference type="PANTHER" id="PTHR30002">
    <property type="entry name" value="EPOXYQUEUOSINE REDUCTASE"/>
    <property type="match status" value="1"/>
</dbReference>
<dbReference type="PANTHER" id="PTHR30002:SF4">
    <property type="entry name" value="EPOXYQUEUOSINE REDUCTASE"/>
    <property type="match status" value="1"/>
</dbReference>
<dbReference type="Pfam" id="PF13484">
    <property type="entry name" value="Fer4_16"/>
    <property type="match status" value="1"/>
</dbReference>
<dbReference type="Pfam" id="PF08331">
    <property type="entry name" value="QueG_DUF1730"/>
    <property type="match status" value="1"/>
</dbReference>
<dbReference type="SUPFAM" id="SSF46548">
    <property type="entry name" value="alpha-helical ferredoxin"/>
    <property type="match status" value="1"/>
</dbReference>
<dbReference type="PROSITE" id="PS00198">
    <property type="entry name" value="4FE4S_FER_1"/>
    <property type="match status" value="1"/>
</dbReference>
<dbReference type="PROSITE" id="PS51379">
    <property type="entry name" value="4FE4S_FER_2"/>
    <property type="match status" value="2"/>
</dbReference>
<proteinExistence type="inferred from homology"/>
<evidence type="ECO:0000255" key="1">
    <source>
        <dbReference type="HAMAP-Rule" id="MF_00916"/>
    </source>
</evidence>
<reference key="1">
    <citation type="journal article" date="2007" name="PLoS Genet.">
        <title>Patterns and implications of gene gain and loss in the evolution of Prochlorococcus.</title>
        <authorList>
            <person name="Kettler G.C."/>
            <person name="Martiny A.C."/>
            <person name="Huang K."/>
            <person name="Zucker J."/>
            <person name="Coleman M.L."/>
            <person name="Rodrigue S."/>
            <person name="Chen F."/>
            <person name="Lapidus A."/>
            <person name="Ferriera S."/>
            <person name="Johnson J."/>
            <person name="Steglich C."/>
            <person name="Church G.M."/>
            <person name="Richardson P."/>
            <person name="Chisholm S.W."/>
        </authorList>
    </citation>
    <scope>NUCLEOTIDE SEQUENCE [LARGE SCALE GENOMIC DNA]</scope>
    <source>
        <strain>NATL2A</strain>
    </source>
</reference>
<gene>
    <name evidence="1" type="primary">queG</name>
    <name type="ordered locus">PMN2A_1334</name>
</gene>
<keyword id="KW-0004">4Fe-4S</keyword>
<keyword id="KW-0963">Cytoplasm</keyword>
<keyword id="KW-0408">Iron</keyword>
<keyword id="KW-0411">Iron-sulfur</keyword>
<keyword id="KW-0479">Metal-binding</keyword>
<keyword id="KW-0560">Oxidoreductase</keyword>
<keyword id="KW-0671">Queuosine biosynthesis</keyword>
<keyword id="KW-1185">Reference proteome</keyword>
<keyword id="KW-0677">Repeat</keyword>
<keyword id="KW-0819">tRNA processing</keyword>